<reference key="1">
    <citation type="journal article" date="2001" name="Proc. Natl. Acad. Sci. U.S.A.">
        <title>Complete genome sequence of Caulobacter crescentus.</title>
        <authorList>
            <person name="Nierman W.C."/>
            <person name="Feldblyum T.V."/>
            <person name="Laub M.T."/>
            <person name="Paulsen I.T."/>
            <person name="Nelson K.E."/>
            <person name="Eisen J.A."/>
            <person name="Heidelberg J.F."/>
            <person name="Alley M.R.K."/>
            <person name="Ohta N."/>
            <person name="Maddock J.R."/>
            <person name="Potocka I."/>
            <person name="Nelson W.C."/>
            <person name="Newton A."/>
            <person name="Stephens C."/>
            <person name="Phadke N.D."/>
            <person name="Ely B."/>
            <person name="DeBoy R.T."/>
            <person name="Dodson R.J."/>
            <person name="Durkin A.S."/>
            <person name="Gwinn M.L."/>
            <person name="Haft D.H."/>
            <person name="Kolonay J.F."/>
            <person name="Smit J."/>
            <person name="Craven M.B."/>
            <person name="Khouri H.M."/>
            <person name="Shetty J."/>
            <person name="Berry K.J."/>
            <person name="Utterback T.R."/>
            <person name="Tran K."/>
            <person name="Wolf A.M."/>
            <person name="Vamathevan J.J."/>
            <person name="Ermolaeva M.D."/>
            <person name="White O."/>
            <person name="Salzberg S.L."/>
            <person name="Venter J.C."/>
            <person name="Shapiro L."/>
            <person name="Fraser C.M."/>
        </authorList>
    </citation>
    <scope>NUCLEOTIDE SEQUENCE [LARGE SCALE GENOMIC DNA]</scope>
    <source>
        <strain>ATCC 19089 / CIP 103742 / CB 15</strain>
    </source>
</reference>
<protein>
    <recommendedName>
        <fullName evidence="1">Bifunctional protein GlmU</fullName>
    </recommendedName>
    <domain>
        <recommendedName>
            <fullName evidence="1">UDP-N-acetylglucosamine pyrophosphorylase</fullName>
            <ecNumber evidence="1">2.7.7.23</ecNumber>
        </recommendedName>
        <alternativeName>
            <fullName evidence="1">N-acetylglucosamine-1-phosphate uridyltransferase</fullName>
        </alternativeName>
    </domain>
    <domain>
        <recommendedName>
            <fullName evidence="1">Glucosamine-1-phosphate N-acetyltransferase</fullName>
            <ecNumber evidence="1">2.3.1.157</ecNumber>
        </recommendedName>
    </domain>
</protein>
<proteinExistence type="inferred from homology"/>
<dbReference type="EC" id="2.7.7.23" evidence="1"/>
<dbReference type="EC" id="2.3.1.157" evidence="1"/>
<dbReference type="EMBL" id="AE005673">
    <property type="protein sequence ID" value="AAK24275.1"/>
    <property type="molecule type" value="Genomic_DNA"/>
</dbReference>
<dbReference type="PIR" id="G87534">
    <property type="entry name" value="G87534"/>
</dbReference>
<dbReference type="RefSeq" id="NP_421107.1">
    <property type="nucleotide sequence ID" value="NC_002696.2"/>
</dbReference>
<dbReference type="RefSeq" id="WP_010920163.1">
    <property type="nucleotide sequence ID" value="NC_002696.2"/>
</dbReference>
<dbReference type="SMR" id="Q9A5Z3"/>
<dbReference type="STRING" id="190650.CC_2304"/>
<dbReference type="EnsemblBacteria" id="AAK24275">
    <property type="protein sequence ID" value="AAK24275"/>
    <property type="gene ID" value="CC_2304"/>
</dbReference>
<dbReference type="KEGG" id="ccr:CC_2304"/>
<dbReference type="PATRIC" id="fig|190650.5.peg.2323"/>
<dbReference type="eggNOG" id="COG1207">
    <property type="taxonomic scope" value="Bacteria"/>
</dbReference>
<dbReference type="HOGENOM" id="CLU_029499_15_2_5"/>
<dbReference type="BioCyc" id="CAULO:CC2304-MONOMER"/>
<dbReference type="UniPathway" id="UPA00113">
    <property type="reaction ID" value="UER00532"/>
</dbReference>
<dbReference type="UniPathway" id="UPA00113">
    <property type="reaction ID" value="UER00533"/>
</dbReference>
<dbReference type="UniPathway" id="UPA00973"/>
<dbReference type="Proteomes" id="UP000001816">
    <property type="component" value="Chromosome"/>
</dbReference>
<dbReference type="GO" id="GO:0005737">
    <property type="term" value="C:cytoplasm"/>
    <property type="evidence" value="ECO:0007669"/>
    <property type="project" value="UniProtKB-SubCell"/>
</dbReference>
<dbReference type="GO" id="GO:0016020">
    <property type="term" value="C:membrane"/>
    <property type="evidence" value="ECO:0007669"/>
    <property type="project" value="GOC"/>
</dbReference>
<dbReference type="GO" id="GO:0019134">
    <property type="term" value="F:glucosamine-1-phosphate N-acetyltransferase activity"/>
    <property type="evidence" value="ECO:0007669"/>
    <property type="project" value="UniProtKB-UniRule"/>
</dbReference>
<dbReference type="GO" id="GO:0000287">
    <property type="term" value="F:magnesium ion binding"/>
    <property type="evidence" value="ECO:0007669"/>
    <property type="project" value="UniProtKB-UniRule"/>
</dbReference>
<dbReference type="GO" id="GO:0003977">
    <property type="term" value="F:UDP-N-acetylglucosamine diphosphorylase activity"/>
    <property type="evidence" value="ECO:0007669"/>
    <property type="project" value="UniProtKB-UniRule"/>
</dbReference>
<dbReference type="GO" id="GO:0000902">
    <property type="term" value="P:cell morphogenesis"/>
    <property type="evidence" value="ECO:0007669"/>
    <property type="project" value="UniProtKB-UniRule"/>
</dbReference>
<dbReference type="GO" id="GO:0071555">
    <property type="term" value="P:cell wall organization"/>
    <property type="evidence" value="ECO:0007669"/>
    <property type="project" value="UniProtKB-KW"/>
</dbReference>
<dbReference type="GO" id="GO:0009245">
    <property type="term" value="P:lipid A biosynthetic process"/>
    <property type="evidence" value="ECO:0007669"/>
    <property type="project" value="UniProtKB-UniRule"/>
</dbReference>
<dbReference type="GO" id="GO:0009252">
    <property type="term" value="P:peptidoglycan biosynthetic process"/>
    <property type="evidence" value="ECO:0007669"/>
    <property type="project" value="UniProtKB-UniRule"/>
</dbReference>
<dbReference type="GO" id="GO:0008360">
    <property type="term" value="P:regulation of cell shape"/>
    <property type="evidence" value="ECO:0007669"/>
    <property type="project" value="UniProtKB-KW"/>
</dbReference>
<dbReference type="GO" id="GO:0006048">
    <property type="term" value="P:UDP-N-acetylglucosamine biosynthetic process"/>
    <property type="evidence" value="ECO:0007669"/>
    <property type="project" value="UniProtKB-UniPathway"/>
</dbReference>
<dbReference type="CDD" id="cd02540">
    <property type="entry name" value="GT2_GlmU_N_bac"/>
    <property type="match status" value="1"/>
</dbReference>
<dbReference type="CDD" id="cd03353">
    <property type="entry name" value="LbH_GlmU_C"/>
    <property type="match status" value="1"/>
</dbReference>
<dbReference type="Gene3D" id="2.160.10.10">
    <property type="entry name" value="Hexapeptide repeat proteins"/>
    <property type="match status" value="1"/>
</dbReference>
<dbReference type="Gene3D" id="3.90.550.10">
    <property type="entry name" value="Spore Coat Polysaccharide Biosynthesis Protein SpsA, Chain A"/>
    <property type="match status" value="1"/>
</dbReference>
<dbReference type="HAMAP" id="MF_01631">
    <property type="entry name" value="GlmU"/>
    <property type="match status" value="1"/>
</dbReference>
<dbReference type="InterPro" id="IPR005882">
    <property type="entry name" value="Bifunctional_GlmU"/>
</dbReference>
<dbReference type="InterPro" id="IPR050065">
    <property type="entry name" value="GlmU-like"/>
</dbReference>
<dbReference type="InterPro" id="IPR038009">
    <property type="entry name" value="GlmU_C_LbH"/>
</dbReference>
<dbReference type="InterPro" id="IPR001451">
    <property type="entry name" value="Hexapep"/>
</dbReference>
<dbReference type="InterPro" id="IPR025877">
    <property type="entry name" value="MobA-like_NTP_Trfase"/>
</dbReference>
<dbReference type="InterPro" id="IPR029044">
    <property type="entry name" value="Nucleotide-diphossugar_trans"/>
</dbReference>
<dbReference type="InterPro" id="IPR011004">
    <property type="entry name" value="Trimer_LpxA-like_sf"/>
</dbReference>
<dbReference type="NCBIfam" id="TIGR01173">
    <property type="entry name" value="glmU"/>
    <property type="match status" value="1"/>
</dbReference>
<dbReference type="NCBIfam" id="NF010933">
    <property type="entry name" value="PRK14353.1"/>
    <property type="match status" value="1"/>
</dbReference>
<dbReference type="PANTHER" id="PTHR43584:SF3">
    <property type="entry name" value="BIFUNCTIONAL PROTEIN GLMU"/>
    <property type="match status" value="1"/>
</dbReference>
<dbReference type="PANTHER" id="PTHR43584">
    <property type="entry name" value="NUCLEOTIDYL TRANSFERASE"/>
    <property type="match status" value="1"/>
</dbReference>
<dbReference type="Pfam" id="PF00132">
    <property type="entry name" value="Hexapep"/>
    <property type="match status" value="2"/>
</dbReference>
<dbReference type="Pfam" id="PF12804">
    <property type="entry name" value="NTP_transf_3"/>
    <property type="match status" value="1"/>
</dbReference>
<dbReference type="SUPFAM" id="SSF53448">
    <property type="entry name" value="Nucleotide-diphospho-sugar transferases"/>
    <property type="match status" value="1"/>
</dbReference>
<dbReference type="SUPFAM" id="SSF51161">
    <property type="entry name" value="Trimeric LpxA-like enzymes"/>
    <property type="match status" value="1"/>
</dbReference>
<feature type="chain" id="PRO_0000233754" description="Bifunctional protein GlmU">
    <location>
        <begin position="1"/>
        <end position="462"/>
    </location>
</feature>
<feature type="region of interest" description="Pyrophosphorylase" evidence="1">
    <location>
        <begin position="1"/>
        <end position="239"/>
    </location>
</feature>
<feature type="region of interest" description="Linker" evidence="1">
    <location>
        <begin position="240"/>
        <end position="260"/>
    </location>
</feature>
<feature type="region of interest" description="N-acetyltransferase" evidence="1">
    <location>
        <begin position="261"/>
        <end position="462"/>
    </location>
</feature>
<feature type="active site" description="Proton acceptor" evidence="1">
    <location>
        <position position="356"/>
    </location>
</feature>
<feature type="binding site" evidence="1">
    <location>
        <begin position="17"/>
        <end position="20"/>
    </location>
    <ligand>
        <name>UDP-N-acetyl-alpha-D-glucosamine</name>
        <dbReference type="ChEBI" id="CHEBI:57705"/>
    </ligand>
</feature>
<feature type="binding site" evidence="1">
    <location>
        <position position="31"/>
    </location>
    <ligand>
        <name>UDP-N-acetyl-alpha-D-glucosamine</name>
        <dbReference type="ChEBI" id="CHEBI:57705"/>
    </ligand>
</feature>
<feature type="binding site" evidence="1">
    <location>
        <position position="84"/>
    </location>
    <ligand>
        <name>UDP-N-acetyl-alpha-D-glucosamine</name>
        <dbReference type="ChEBI" id="CHEBI:57705"/>
    </ligand>
</feature>
<feature type="binding site" evidence="1">
    <location>
        <begin position="89"/>
        <end position="90"/>
    </location>
    <ligand>
        <name>UDP-N-acetyl-alpha-D-glucosamine</name>
        <dbReference type="ChEBI" id="CHEBI:57705"/>
    </ligand>
</feature>
<feature type="binding site" evidence="1">
    <location>
        <position position="114"/>
    </location>
    <ligand>
        <name>Mg(2+)</name>
        <dbReference type="ChEBI" id="CHEBI:18420"/>
    </ligand>
</feature>
<feature type="binding site" evidence="1">
    <location>
        <position position="150"/>
    </location>
    <ligand>
        <name>UDP-N-acetyl-alpha-D-glucosamine</name>
        <dbReference type="ChEBI" id="CHEBI:57705"/>
    </ligand>
</feature>
<feature type="binding site" evidence="1">
    <location>
        <position position="165"/>
    </location>
    <ligand>
        <name>UDP-N-acetyl-alpha-D-glucosamine</name>
        <dbReference type="ChEBI" id="CHEBI:57705"/>
    </ligand>
</feature>
<feature type="binding site" evidence="1">
    <location>
        <position position="180"/>
    </location>
    <ligand>
        <name>UDP-N-acetyl-alpha-D-glucosamine</name>
        <dbReference type="ChEBI" id="CHEBI:57705"/>
    </ligand>
</feature>
<feature type="binding site" evidence="1">
    <location>
        <position position="237"/>
    </location>
    <ligand>
        <name>Mg(2+)</name>
        <dbReference type="ChEBI" id="CHEBI:18420"/>
    </ligand>
</feature>
<feature type="binding site" evidence="1">
    <location>
        <position position="237"/>
    </location>
    <ligand>
        <name>UDP-N-acetyl-alpha-D-glucosamine</name>
        <dbReference type="ChEBI" id="CHEBI:57705"/>
    </ligand>
</feature>
<feature type="binding site" evidence="1">
    <location>
        <position position="326"/>
    </location>
    <ligand>
        <name>UDP-N-acetyl-alpha-D-glucosamine</name>
        <dbReference type="ChEBI" id="CHEBI:57705"/>
    </ligand>
</feature>
<feature type="binding site" evidence="1">
    <location>
        <position position="344"/>
    </location>
    <ligand>
        <name>UDP-N-acetyl-alpha-D-glucosamine</name>
        <dbReference type="ChEBI" id="CHEBI:57705"/>
    </ligand>
</feature>
<feature type="binding site" evidence="1">
    <location>
        <position position="359"/>
    </location>
    <ligand>
        <name>UDP-N-acetyl-alpha-D-glucosamine</name>
        <dbReference type="ChEBI" id="CHEBI:57705"/>
    </ligand>
</feature>
<feature type="binding site" evidence="1">
    <location>
        <position position="370"/>
    </location>
    <ligand>
        <name>UDP-N-acetyl-alpha-D-glucosamine</name>
        <dbReference type="ChEBI" id="CHEBI:57705"/>
    </ligand>
</feature>
<feature type="binding site" evidence="1">
    <location>
        <position position="373"/>
    </location>
    <ligand>
        <name>acetyl-CoA</name>
        <dbReference type="ChEBI" id="CHEBI:57288"/>
    </ligand>
</feature>
<feature type="binding site" evidence="1">
    <location>
        <begin position="379"/>
        <end position="380"/>
    </location>
    <ligand>
        <name>acetyl-CoA</name>
        <dbReference type="ChEBI" id="CHEBI:57288"/>
    </ligand>
</feature>
<feature type="binding site" evidence="1">
    <location>
        <position position="398"/>
    </location>
    <ligand>
        <name>acetyl-CoA</name>
        <dbReference type="ChEBI" id="CHEBI:57288"/>
    </ligand>
</feature>
<feature type="binding site" evidence="1">
    <location>
        <position position="416"/>
    </location>
    <ligand>
        <name>acetyl-CoA</name>
        <dbReference type="ChEBI" id="CHEBI:57288"/>
    </ligand>
</feature>
<feature type="binding site" evidence="1">
    <location>
        <position position="433"/>
    </location>
    <ligand>
        <name>acetyl-CoA</name>
        <dbReference type="ChEBI" id="CHEBI:57288"/>
    </ligand>
</feature>
<evidence type="ECO:0000255" key="1">
    <source>
        <dbReference type="HAMAP-Rule" id="MF_01631"/>
    </source>
</evidence>
<name>GLMU_CAUVC</name>
<organism>
    <name type="scientific">Caulobacter vibrioides (strain ATCC 19089 / CIP 103742 / CB 15)</name>
    <name type="common">Caulobacter crescentus</name>
    <dbReference type="NCBI Taxonomy" id="190650"/>
    <lineage>
        <taxon>Bacteria</taxon>
        <taxon>Pseudomonadati</taxon>
        <taxon>Pseudomonadota</taxon>
        <taxon>Alphaproteobacteria</taxon>
        <taxon>Caulobacterales</taxon>
        <taxon>Caulobacteraceae</taxon>
        <taxon>Caulobacter</taxon>
    </lineage>
</organism>
<accession>Q9A5Z3</accession>
<gene>
    <name evidence="1" type="primary">glmU</name>
    <name type="ordered locus">CC_2304</name>
</gene>
<sequence length="462" mass="48191">MTESVSKPVRPRAAVILAAGQGTRMKSPTPKVLHRLAGRTLLDHAIDAAEGLGCERIIVVVGAHSPQVGESARKRLGPDATVIQDPPLGTGHAVLAAKDALADFHGDVVVTYADCPLTTAPVIAPLFDLITHVAHVAVLGFEAQNPTGYGRLILAPGHVLLRIVEEKEADLATKQVKHCNSGVLAADRAVLFDLLANVRNDNAKGEYYLTDVVGLAHERHLSTRTAFAPEASVQGVNAQAELAAAEAVWQQNRRKALMVDGVTMPAPDTVHLAWDTQIAGGAVVEQFVVFGPGVSVASGAVIKAFSHLEGAVVGEGALIGPYARLRPGAEIGPDAHIGNFVEVKKVKVGAGAKANHLSYLGDGSVGEKANIGAGTIFCNYDGFEKFETHVGKGAFIGSNSALVAPVRVGDGAMTGSGSVITKDVEDGALALSRADQTSKAGWATKFRAIKQAQKDKKKDKKA</sequence>
<comment type="function">
    <text evidence="1">Catalyzes the last two sequential reactions in the de novo biosynthetic pathway for UDP-N-acetylglucosamine (UDP-GlcNAc). The C-terminal domain catalyzes the transfer of acetyl group from acetyl coenzyme A to glucosamine-1-phosphate (GlcN-1-P) to produce N-acetylglucosamine-1-phosphate (GlcNAc-1-P), which is converted into UDP-GlcNAc by the transfer of uridine 5-monophosphate (from uridine 5-triphosphate), a reaction catalyzed by the N-terminal domain.</text>
</comment>
<comment type="catalytic activity">
    <reaction evidence="1">
        <text>alpha-D-glucosamine 1-phosphate + acetyl-CoA = N-acetyl-alpha-D-glucosamine 1-phosphate + CoA + H(+)</text>
        <dbReference type="Rhea" id="RHEA:13725"/>
        <dbReference type="ChEBI" id="CHEBI:15378"/>
        <dbReference type="ChEBI" id="CHEBI:57287"/>
        <dbReference type="ChEBI" id="CHEBI:57288"/>
        <dbReference type="ChEBI" id="CHEBI:57776"/>
        <dbReference type="ChEBI" id="CHEBI:58516"/>
        <dbReference type="EC" id="2.3.1.157"/>
    </reaction>
</comment>
<comment type="catalytic activity">
    <reaction evidence="1">
        <text>N-acetyl-alpha-D-glucosamine 1-phosphate + UTP + H(+) = UDP-N-acetyl-alpha-D-glucosamine + diphosphate</text>
        <dbReference type="Rhea" id="RHEA:13509"/>
        <dbReference type="ChEBI" id="CHEBI:15378"/>
        <dbReference type="ChEBI" id="CHEBI:33019"/>
        <dbReference type="ChEBI" id="CHEBI:46398"/>
        <dbReference type="ChEBI" id="CHEBI:57705"/>
        <dbReference type="ChEBI" id="CHEBI:57776"/>
        <dbReference type="EC" id="2.7.7.23"/>
    </reaction>
</comment>
<comment type="cofactor">
    <cofactor evidence="1">
        <name>Mg(2+)</name>
        <dbReference type="ChEBI" id="CHEBI:18420"/>
    </cofactor>
    <text evidence="1">Binds 1 Mg(2+) ion per subunit.</text>
</comment>
<comment type="pathway">
    <text evidence="1">Nucleotide-sugar biosynthesis; UDP-N-acetyl-alpha-D-glucosamine biosynthesis; N-acetyl-alpha-D-glucosamine 1-phosphate from alpha-D-glucosamine 6-phosphate (route II): step 2/2.</text>
</comment>
<comment type="pathway">
    <text evidence="1">Nucleotide-sugar biosynthesis; UDP-N-acetyl-alpha-D-glucosamine biosynthesis; UDP-N-acetyl-alpha-D-glucosamine from N-acetyl-alpha-D-glucosamine 1-phosphate: step 1/1.</text>
</comment>
<comment type="pathway">
    <text evidence="1">Bacterial outer membrane biogenesis; LPS lipid A biosynthesis.</text>
</comment>
<comment type="subunit">
    <text evidence="1">Homotrimer.</text>
</comment>
<comment type="subcellular location">
    <subcellularLocation>
        <location evidence="1">Cytoplasm</location>
    </subcellularLocation>
</comment>
<comment type="similarity">
    <text evidence="1">In the N-terminal section; belongs to the N-acetylglucosamine-1-phosphate uridyltransferase family.</text>
</comment>
<comment type="similarity">
    <text evidence="1">In the C-terminal section; belongs to the transferase hexapeptide repeat family.</text>
</comment>
<keyword id="KW-0012">Acyltransferase</keyword>
<keyword id="KW-0133">Cell shape</keyword>
<keyword id="KW-0961">Cell wall biogenesis/degradation</keyword>
<keyword id="KW-0963">Cytoplasm</keyword>
<keyword id="KW-0460">Magnesium</keyword>
<keyword id="KW-0479">Metal-binding</keyword>
<keyword id="KW-0511">Multifunctional enzyme</keyword>
<keyword id="KW-0548">Nucleotidyltransferase</keyword>
<keyword id="KW-0573">Peptidoglycan synthesis</keyword>
<keyword id="KW-1185">Reference proteome</keyword>
<keyword id="KW-0677">Repeat</keyword>
<keyword id="KW-0808">Transferase</keyword>